<proteinExistence type="evidence at transcript level"/>
<protein>
    <recommendedName>
        <fullName evidence="7">Octopamine receptor beta-2R</fullName>
        <shortName evidence="6">CsOA2B2</shortName>
    </recommendedName>
</protein>
<gene>
    <name evidence="6 8" type="primary">OA2B2</name>
</gene>
<keyword id="KW-1003">Cell membrane</keyword>
<keyword id="KW-0297">G-protein coupled receptor</keyword>
<keyword id="KW-0325">Glycoprotein</keyword>
<keyword id="KW-0472">Membrane</keyword>
<keyword id="KW-0675">Receptor</keyword>
<keyword id="KW-0807">Transducer</keyword>
<keyword id="KW-0812">Transmembrane</keyword>
<keyword id="KW-1133">Transmembrane helix</keyword>
<accession>G3M4F8</accession>
<reference evidence="8" key="1">
    <citation type="journal article" date="2012" name="J. Exp. Biol.">
        <title>Characterization of a beta-adrenergic-like octopamine receptor from the rice stem borer (Chilo suppressalis).</title>
        <authorList>
            <person name="Wu S.F."/>
            <person name="Yao Y."/>
            <person name="Huang J."/>
            <person name="Ye G.Y."/>
        </authorList>
    </citation>
    <scope>NUCLEOTIDE SEQUENCE [MRNA]</scope>
    <scope>FUNCTION</scope>
    <scope>SUBCELLULAR LOCATION</scope>
    <scope>DEVELOPMENTAL STAGE</scope>
    <scope>PHYLOGENETIC ANALYSIS</scope>
    <source>
        <tissue evidence="6">Nerve cord</tissue>
    </source>
</reference>
<organism evidence="8">
    <name type="scientific">Chilo suppressalis</name>
    <name type="common">Asiatic rice borer moth</name>
    <dbReference type="NCBI Taxonomy" id="168631"/>
    <lineage>
        <taxon>Eukaryota</taxon>
        <taxon>Metazoa</taxon>
        <taxon>Ecdysozoa</taxon>
        <taxon>Arthropoda</taxon>
        <taxon>Hexapoda</taxon>
        <taxon>Insecta</taxon>
        <taxon>Pterygota</taxon>
        <taxon>Neoptera</taxon>
        <taxon>Endopterygota</taxon>
        <taxon>Lepidoptera</taxon>
        <taxon>Glossata</taxon>
        <taxon>Ditrysia</taxon>
        <taxon>Pyraloidea</taxon>
        <taxon>Crambidae</taxon>
        <taxon>Crambinae</taxon>
        <taxon>Chilo</taxon>
    </lineage>
</organism>
<evidence type="ECO:0000255" key="1"/>
<evidence type="ECO:0000255" key="2">
    <source>
        <dbReference type="PROSITE-ProRule" id="PRU00498"/>
    </source>
</evidence>
<evidence type="ECO:0000255" key="3">
    <source>
        <dbReference type="PROSITE-ProRule" id="PRU00521"/>
    </source>
</evidence>
<evidence type="ECO:0000255" key="4">
    <source>
        <dbReference type="RuleBase" id="RU000688"/>
    </source>
</evidence>
<evidence type="ECO:0000269" key="5">
    <source>
    </source>
</evidence>
<evidence type="ECO:0000303" key="6">
    <source>
    </source>
</evidence>
<evidence type="ECO:0000305" key="7"/>
<evidence type="ECO:0000312" key="8">
    <source>
        <dbReference type="EMBL" id="AEO89318.1"/>
    </source>
</evidence>
<comment type="function">
    <text evidence="5">Autoreceptor for octopamine, which is a neurotransmitter, neurohormone, and neuromodulator in invertebrates. Also acts as a receptor for tyramine, but with much less potency. The activity of this receptor is mediated by G proteins which activate adenylyl cyclase.</text>
</comment>
<comment type="subcellular location">
    <subcellularLocation>
        <location evidence="5">Cell membrane</location>
        <topology evidence="1">Multi-pass membrane protein</topology>
    </subcellularLocation>
</comment>
<comment type="developmental stage">
    <text evidence="5">Expressed in egg, larva, pupa and adult. In fifth-instar larvae stage, highly expressed in the nerve cord, and by a lesser extent in the epidermis, hemocytes, Malpighian tubules, midgut and fat body.</text>
</comment>
<comment type="similarity">
    <text evidence="3 4 7">Belongs to the G-protein coupled receptor 1 family.</text>
</comment>
<feature type="chain" id="PRO_0000441026" description="Octopamine receptor beta-2R">
    <location>
        <begin position="1"/>
        <end position="395"/>
    </location>
</feature>
<feature type="topological domain" description="Extracellular" evidence="7">
    <location>
        <begin position="1"/>
        <end position="42"/>
    </location>
</feature>
<feature type="transmembrane region" description="Helical; Name=1" evidence="1">
    <location>
        <begin position="43"/>
        <end position="63"/>
    </location>
</feature>
<feature type="topological domain" description="Cytoplasmic" evidence="7">
    <location>
        <begin position="64"/>
        <end position="74"/>
    </location>
</feature>
<feature type="transmembrane region" description="Helical; Name=2" evidence="1">
    <location>
        <begin position="75"/>
        <end position="95"/>
    </location>
</feature>
<feature type="topological domain" description="Extracellular" evidence="7">
    <location>
        <begin position="96"/>
        <end position="117"/>
    </location>
</feature>
<feature type="transmembrane region" description="Helical; Name=3" evidence="1">
    <location>
        <begin position="118"/>
        <end position="140"/>
    </location>
</feature>
<feature type="topological domain" description="Cytoplasmic" evidence="7">
    <location>
        <begin position="141"/>
        <end position="154"/>
    </location>
</feature>
<feature type="transmembrane region" description="Helical; Name=4" evidence="1">
    <location>
        <begin position="155"/>
        <end position="175"/>
    </location>
</feature>
<feature type="topological domain" description="Extracellular" evidence="7">
    <location>
        <begin position="176"/>
        <end position="202"/>
    </location>
</feature>
<feature type="transmembrane region" description="Helical; Name=5" evidence="1">
    <location>
        <begin position="203"/>
        <end position="223"/>
    </location>
</feature>
<feature type="topological domain" description="Cytoplasmic" evidence="7">
    <location>
        <begin position="224"/>
        <end position="282"/>
    </location>
</feature>
<feature type="transmembrane region" description="Helical; Name=6" evidence="1">
    <location>
        <begin position="283"/>
        <end position="303"/>
    </location>
</feature>
<feature type="topological domain" description="Extracellular" evidence="7">
    <location>
        <begin position="304"/>
        <end position="315"/>
    </location>
</feature>
<feature type="transmembrane region" description="Helical; Name=7" evidence="1">
    <location>
        <begin position="316"/>
        <end position="336"/>
    </location>
</feature>
<feature type="topological domain" description="Cytoplasmic" evidence="7">
    <location>
        <begin position="337"/>
        <end position="395"/>
    </location>
</feature>
<feature type="glycosylation site" description="N-linked (GlcNAc...) asparagine" evidence="2">
    <location>
        <position position="5"/>
    </location>
</feature>
<feature type="glycosylation site" description="N-linked (GlcNAc...) asparagine" evidence="2">
    <location>
        <position position="12"/>
    </location>
</feature>
<feature type="glycosylation site" description="N-linked (GlcNAc...) asparagine" evidence="2">
    <location>
        <position position="24"/>
    </location>
</feature>
<feature type="glycosylation site" description="N-linked (GlcNAc...) asparagine" evidence="2">
    <location>
        <position position="114"/>
    </location>
</feature>
<sequence>MDPINGSHSGANATISDITNGAYNATDAGEWTSSVMFKLRTCVLLLIVIMAVLGNMLVIVSVMRHRKLRVITNYFVVSLAFADILVAMVVMPFNFSVQFNQGWVFGETICDLWNSSDVYFTSTSILHLCCISVDRYYAIVKPLKYPIKMTKKMAFVMLAATWLSPITISYVPIFMGWYTTTDFLESRRDDQCEFKVNKPYAVISSSISFWIPCTIMIFTYLAIFKEANRQEKALHARAGNAMLMHRHSREVSDKNGALHINATTPTKDRNLLKMKREHKAARTLGIIMGAFILCWLPFFLYYVSTSLCDSCNCPEVVTVIMFWTGYFNSALNPIIYAYFNRDFRNAFKNTLACAFCSFCKRSASDLDAMERLDRRGSAQLRVPIPSRRASDLASL</sequence>
<name>OCTB2_CHISP</name>
<dbReference type="EMBL" id="JN620367">
    <property type="protein sequence ID" value="AEO89318.1"/>
    <property type="molecule type" value="mRNA"/>
</dbReference>
<dbReference type="SMR" id="G3M4F8"/>
<dbReference type="GlyCosmos" id="G3M4F8">
    <property type="glycosylation" value="4 sites, No reported glycans"/>
</dbReference>
<dbReference type="OrthoDB" id="5957871at2759"/>
<dbReference type="GO" id="GO:0016020">
    <property type="term" value="C:membrane"/>
    <property type="evidence" value="ECO:0000314"/>
    <property type="project" value="UniProtKB"/>
</dbReference>
<dbReference type="GO" id="GO:0005886">
    <property type="term" value="C:plasma membrane"/>
    <property type="evidence" value="ECO:0000314"/>
    <property type="project" value="UniProtKB"/>
</dbReference>
<dbReference type="GO" id="GO:0004989">
    <property type="term" value="F:octopamine receptor activity"/>
    <property type="evidence" value="ECO:0000314"/>
    <property type="project" value="UniProtKB"/>
</dbReference>
<dbReference type="GO" id="GO:0008226">
    <property type="term" value="F:tyramine receptor activity"/>
    <property type="evidence" value="ECO:0000314"/>
    <property type="project" value="UniProtKB"/>
</dbReference>
<dbReference type="GO" id="GO:0071880">
    <property type="term" value="P:adenylate cyclase-activating adrenergic receptor signaling pathway"/>
    <property type="evidence" value="ECO:0007669"/>
    <property type="project" value="TreeGrafter"/>
</dbReference>
<dbReference type="GO" id="GO:0007189">
    <property type="term" value="P:adenylate cyclase-activating G protein-coupled receptor signaling pathway"/>
    <property type="evidence" value="ECO:0000314"/>
    <property type="project" value="UniProtKB"/>
</dbReference>
<dbReference type="GO" id="GO:0071418">
    <property type="term" value="P:cellular response to amine stimulus"/>
    <property type="evidence" value="ECO:0000314"/>
    <property type="project" value="UniProtKB"/>
</dbReference>
<dbReference type="GO" id="GO:0071927">
    <property type="term" value="P:octopamine signaling pathway"/>
    <property type="evidence" value="ECO:0000314"/>
    <property type="project" value="UniProtKB"/>
</dbReference>
<dbReference type="GO" id="GO:0043410">
    <property type="term" value="P:positive regulation of MAPK cascade"/>
    <property type="evidence" value="ECO:0007669"/>
    <property type="project" value="TreeGrafter"/>
</dbReference>
<dbReference type="GO" id="GO:0071928">
    <property type="term" value="P:tyramine signaling pathway"/>
    <property type="evidence" value="ECO:0000314"/>
    <property type="project" value="UniProtKB"/>
</dbReference>
<dbReference type="CDD" id="cd15066">
    <property type="entry name" value="7tmA_DmOct-betaAR-like"/>
    <property type="match status" value="1"/>
</dbReference>
<dbReference type="FunFam" id="1.20.1070.10:FF:000271">
    <property type="entry name" value="Octopamine receptor beta-2R"/>
    <property type="match status" value="1"/>
</dbReference>
<dbReference type="Gene3D" id="1.20.1070.10">
    <property type="entry name" value="Rhodopsin 7-helix transmembrane proteins"/>
    <property type="match status" value="1"/>
</dbReference>
<dbReference type="InterPro" id="IPR000276">
    <property type="entry name" value="GPCR_Rhodpsn"/>
</dbReference>
<dbReference type="InterPro" id="IPR017452">
    <property type="entry name" value="GPCR_Rhodpsn_7TM"/>
</dbReference>
<dbReference type="PANTHER" id="PTHR24248">
    <property type="entry name" value="ADRENERGIC RECEPTOR-RELATED G-PROTEIN COUPLED RECEPTOR"/>
    <property type="match status" value="1"/>
</dbReference>
<dbReference type="PANTHER" id="PTHR24248:SF187">
    <property type="entry name" value="OCTOPAMINE RECEPTOR BETA-2R"/>
    <property type="match status" value="1"/>
</dbReference>
<dbReference type="Pfam" id="PF00001">
    <property type="entry name" value="7tm_1"/>
    <property type="match status" value="1"/>
</dbReference>
<dbReference type="PRINTS" id="PR01102">
    <property type="entry name" value="5HT6RECEPTR"/>
</dbReference>
<dbReference type="PRINTS" id="PR00237">
    <property type="entry name" value="GPCRRHODOPSN"/>
</dbReference>
<dbReference type="SMART" id="SM01381">
    <property type="entry name" value="7TM_GPCR_Srsx"/>
    <property type="match status" value="1"/>
</dbReference>
<dbReference type="SUPFAM" id="SSF81321">
    <property type="entry name" value="Family A G protein-coupled receptor-like"/>
    <property type="match status" value="1"/>
</dbReference>
<dbReference type="PROSITE" id="PS00237">
    <property type="entry name" value="G_PROTEIN_RECEP_F1_1"/>
    <property type="match status" value="1"/>
</dbReference>
<dbReference type="PROSITE" id="PS50262">
    <property type="entry name" value="G_PROTEIN_RECEP_F1_2"/>
    <property type="match status" value="1"/>
</dbReference>